<evidence type="ECO:0000255" key="1">
    <source>
        <dbReference type="HAMAP-Rule" id="MF_00020"/>
    </source>
</evidence>
<feature type="chain" id="PRO_1000002284" description="Acetate kinase">
    <location>
        <begin position="1"/>
        <end position="398"/>
    </location>
</feature>
<feature type="active site" description="Proton donor/acceptor" evidence="1">
    <location>
        <position position="146"/>
    </location>
</feature>
<feature type="binding site" evidence="1">
    <location>
        <position position="9"/>
    </location>
    <ligand>
        <name>Mg(2+)</name>
        <dbReference type="ChEBI" id="CHEBI:18420"/>
    </ligand>
</feature>
<feature type="binding site" evidence="1">
    <location>
        <position position="16"/>
    </location>
    <ligand>
        <name>ATP</name>
        <dbReference type="ChEBI" id="CHEBI:30616"/>
    </ligand>
</feature>
<feature type="binding site" evidence="1">
    <location>
        <position position="89"/>
    </location>
    <ligand>
        <name>substrate</name>
    </ligand>
</feature>
<feature type="binding site" evidence="1">
    <location>
        <begin position="206"/>
        <end position="210"/>
    </location>
    <ligand>
        <name>ATP</name>
        <dbReference type="ChEBI" id="CHEBI:30616"/>
    </ligand>
</feature>
<feature type="binding site" evidence="1">
    <location>
        <begin position="281"/>
        <end position="283"/>
    </location>
    <ligand>
        <name>ATP</name>
        <dbReference type="ChEBI" id="CHEBI:30616"/>
    </ligand>
</feature>
<feature type="binding site" evidence="1">
    <location>
        <begin position="329"/>
        <end position="333"/>
    </location>
    <ligand>
        <name>ATP</name>
        <dbReference type="ChEBI" id="CHEBI:30616"/>
    </ligand>
</feature>
<feature type="binding site" evidence="1">
    <location>
        <position position="384"/>
    </location>
    <ligand>
        <name>Mg(2+)</name>
        <dbReference type="ChEBI" id="CHEBI:18420"/>
    </ligand>
</feature>
<feature type="site" description="Transition state stabilizer" evidence="1">
    <location>
        <position position="178"/>
    </location>
</feature>
<feature type="site" description="Transition state stabilizer" evidence="1">
    <location>
        <position position="239"/>
    </location>
</feature>
<accession>A7MVE1</accession>
<name>ACKA_VIBC1</name>
<dbReference type="EC" id="2.7.2.1" evidence="1"/>
<dbReference type="EMBL" id="CP000789">
    <property type="protein sequence ID" value="ABU71895.1"/>
    <property type="molecule type" value="Genomic_DNA"/>
</dbReference>
<dbReference type="RefSeq" id="WP_012128482.1">
    <property type="nucleotide sequence ID" value="NC_009783.1"/>
</dbReference>
<dbReference type="SMR" id="A7MVE1"/>
<dbReference type="KEGG" id="vha:VIBHAR_02942"/>
<dbReference type="PATRIC" id="fig|338187.25.peg.3245"/>
<dbReference type="UniPathway" id="UPA00340">
    <property type="reaction ID" value="UER00458"/>
</dbReference>
<dbReference type="Proteomes" id="UP000008152">
    <property type="component" value="Chromosome I"/>
</dbReference>
<dbReference type="GO" id="GO:0005829">
    <property type="term" value="C:cytosol"/>
    <property type="evidence" value="ECO:0007669"/>
    <property type="project" value="TreeGrafter"/>
</dbReference>
<dbReference type="GO" id="GO:0008776">
    <property type="term" value="F:acetate kinase activity"/>
    <property type="evidence" value="ECO:0007669"/>
    <property type="project" value="UniProtKB-UniRule"/>
</dbReference>
<dbReference type="GO" id="GO:0005524">
    <property type="term" value="F:ATP binding"/>
    <property type="evidence" value="ECO:0007669"/>
    <property type="project" value="UniProtKB-KW"/>
</dbReference>
<dbReference type="GO" id="GO:0000287">
    <property type="term" value="F:magnesium ion binding"/>
    <property type="evidence" value="ECO:0007669"/>
    <property type="project" value="UniProtKB-UniRule"/>
</dbReference>
<dbReference type="GO" id="GO:0006083">
    <property type="term" value="P:acetate metabolic process"/>
    <property type="evidence" value="ECO:0007669"/>
    <property type="project" value="TreeGrafter"/>
</dbReference>
<dbReference type="GO" id="GO:0006085">
    <property type="term" value="P:acetyl-CoA biosynthetic process"/>
    <property type="evidence" value="ECO:0007669"/>
    <property type="project" value="UniProtKB-UniRule"/>
</dbReference>
<dbReference type="CDD" id="cd24010">
    <property type="entry name" value="ASKHA_NBD_AcK_PK"/>
    <property type="match status" value="1"/>
</dbReference>
<dbReference type="FunFam" id="3.30.420.40:FF:000041">
    <property type="entry name" value="Acetate kinase"/>
    <property type="match status" value="1"/>
</dbReference>
<dbReference type="FunFam" id="3.30.420.40:FF:000042">
    <property type="entry name" value="Acetate kinase"/>
    <property type="match status" value="1"/>
</dbReference>
<dbReference type="Gene3D" id="3.30.420.40">
    <property type="match status" value="2"/>
</dbReference>
<dbReference type="HAMAP" id="MF_00020">
    <property type="entry name" value="Acetate_kinase"/>
    <property type="match status" value="1"/>
</dbReference>
<dbReference type="InterPro" id="IPR004372">
    <property type="entry name" value="Ac/propionate_kinase"/>
</dbReference>
<dbReference type="InterPro" id="IPR000890">
    <property type="entry name" value="Aliphatic_acid_kin_short-chain"/>
</dbReference>
<dbReference type="InterPro" id="IPR023865">
    <property type="entry name" value="Aliphatic_acid_kinase_CS"/>
</dbReference>
<dbReference type="InterPro" id="IPR043129">
    <property type="entry name" value="ATPase_NBD"/>
</dbReference>
<dbReference type="NCBIfam" id="TIGR00016">
    <property type="entry name" value="ackA"/>
    <property type="match status" value="1"/>
</dbReference>
<dbReference type="PANTHER" id="PTHR21060">
    <property type="entry name" value="ACETATE KINASE"/>
    <property type="match status" value="1"/>
</dbReference>
<dbReference type="PANTHER" id="PTHR21060:SF21">
    <property type="entry name" value="ACETATE KINASE"/>
    <property type="match status" value="1"/>
</dbReference>
<dbReference type="Pfam" id="PF00871">
    <property type="entry name" value="Acetate_kinase"/>
    <property type="match status" value="1"/>
</dbReference>
<dbReference type="PIRSF" id="PIRSF000722">
    <property type="entry name" value="Acetate_prop_kin"/>
    <property type="match status" value="1"/>
</dbReference>
<dbReference type="PRINTS" id="PR00471">
    <property type="entry name" value="ACETATEKNASE"/>
</dbReference>
<dbReference type="SUPFAM" id="SSF53067">
    <property type="entry name" value="Actin-like ATPase domain"/>
    <property type="match status" value="2"/>
</dbReference>
<dbReference type="PROSITE" id="PS01075">
    <property type="entry name" value="ACETATE_KINASE_1"/>
    <property type="match status" value="1"/>
</dbReference>
<dbReference type="PROSITE" id="PS01076">
    <property type="entry name" value="ACETATE_KINASE_2"/>
    <property type="match status" value="1"/>
</dbReference>
<gene>
    <name evidence="1" type="primary">ackA</name>
    <name type="ordered locus">VIBHAR_02942</name>
</gene>
<reference key="1">
    <citation type="submission" date="2007-08" db="EMBL/GenBank/DDBJ databases">
        <authorList>
            <consortium name="The Vibrio harveyi Genome Sequencing Project"/>
            <person name="Bassler B."/>
            <person name="Clifton S.W."/>
            <person name="Fulton L."/>
            <person name="Delehaunty K."/>
            <person name="Fronick C."/>
            <person name="Harrison M."/>
            <person name="Markivic C."/>
            <person name="Fulton R."/>
            <person name="Tin-Wollam A.-M."/>
            <person name="Shah N."/>
            <person name="Pepin K."/>
            <person name="Nash W."/>
            <person name="Thiruvilangam P."/>
            <person name="Bhonagiri V."/>
            <person name="Waters C."/>
            <person name="Tu K.C."/>
            <person name="Irgon J."/>
            <person name="Wilson R.K."/>
        </authorList>
    </citation>
    <scope>NUCLEOTIDE SEQUENCE [LARGE SCALE GENOMIC DNA]</scope>
    <source>
        <strain>ATCC BAA-1116 / BB120</strain>
    </source>
</reference>
<sequence length="398" mass="42678">MSKLVLVLNCGSSSLKFAVVDAETGAEHLTGLAECLGLPEARMKWKLDGKHEAQLGAGAAHVEALSFMVETILASKPELKANLGAIGHRIVHGGEQFTQSALITDDVLKGIQDAATFAPLHNPAHLIGIEAAKVNFPGLQNVAVFDTAFHQTMPEESYLYALPYNLYKEHGIRRYGMHGTSHLFITREVANLLDKPVEEVNIINCHLGNGASVCAIKNGKSVDTSMGLTPLEGLVMGTRCGDIDPAIVFHLHDALGYSVEQINNMLTKESGLAGLTEVTSDCRFVEDNYGEKEEATRAMDVFCHRLAKYVAGYTASMEGRLDAITFTGGIGENSGPIREMVLNRLGIFGIEVDGEANLKARFGGEGTITTANSRIPAMVISTNEELVIAEDAARLAGL</sequence>
<organism>
    <name type="scientific">Vibrio campbellii (strain ATCC BAA-1116)</name>
    <dbReference type="NCBI Taxonomy" id="2902295"/>
    <lineage>
        <taxon>Bacteria</taxon>
        <taxon>Pseudomonadati</taxon>
        <taxon>Pseudomonadota</taxon>
        <taxon>Gammaproteobacteria</taxon>
        <taxon>Vibrionales</taxon>
        <taxon>Vibrionaceae</taxon>
        <taxon>Vibrio</taxon>
    </lineage>
</organism>
<comment type="function">
    <text evidence="1">Catalyzes the formation of acetyl phosphate from acetate and ATP. Can also catalyze the reverse reaction.</text>
</comment>
<comment type="catalytic activity">
    <reaction evidence="1">
        <text>acetate + ATP = acetyl phosphate + ADP</text>
        <dbReference type="Rhea" id="RHEA:11352"/>
        <dbReference type="ChEBI" id="CHEBI:22191"/>
        <dbReference type="ChEBI" id="CHEBI:30089"/>
        <dbReference type="ChEBI" id="CHEBI:30616"/>
        <dbReference type="ChEBI" id="CHEBI:456216"/>
        <dbReference type="EC" id="2.7.2.1"/>
    </reaction>
</comment>
<comment type="cofactor">
    <cofactor evidence="1">
        <name>Mg(2+)</name>
        <dbReference type="ChEBI" id="CHEBI:18420"/>
    </cofactor>
    <cofactor evidence="1">
        <name>Mn(2+)</name>
        <dbReference type="ChEBI" id="CHEBI:29035"/>
    </cofactor>
    <text evidence="1">Mg(2+). Can also accept Mn(2+).</text>
</comment>
<comment type="pathway">
    <text evidence="1">Metabolic intermediate biosynthesis; acetyl-CoA biosynthesis; acetyl-CoA from acetate: step 1/2.</text>
</comment>
<comment type="subunit">
    <text evidence="1">Homodimer.</text>
</comment>
<comment type="subcellular location">
    <subcellularLocation>
        <location evidence="1">Cytoplasm</location>
    </subcellularLocation>
</comment>
<comment type="similarity">
    <text evidence="1">Belongs to the acetokinase family.</text>
</comment>
<keyword id="KW-0067">ATP-binding</keyword>
<keyword id="KW-0963">Cytoplasm</keyword>
<keyword id="KW-0418">Kinase</keyword>
<keyword id="KW-0460">Magnesium</keyword>
<keyword id="KW-0479">Metal-binding</keyword>
<keyword id="KW-0547">Nucleotide-binding</keyword>
<keyword id="KW-0808">Transferase</keyword>
<protein>
    <recommendedName>
        <fullName evidence="1">Acetate kinase</fullName>
        <ecNumber evidence="1">2.7.2.1</ecNumber>
    </recommendedName>
    <alternativeName>
        <fullName evidence="1">Acetokinase</fullName>
    </alternativeName>
</protein>
<proteinExistence type="inferred from homology"/>